<reference key="1">
    <citation type="journal article" date="1999" name="Nature">
        <title>Sequence and analysis of chromosome 4 of the plant Arabidopsis thaliana.</title>
        <authorList>
            <person name="Mayer K.F.X."/>
            <person name="Schueller C."/>
            <person name="Wambutt R."/>
            <person name="Murphy G."/>
            <person name="Volckaert G."/>
            <person name="Pohl T."/>
            <person name="Duesterhoeft A."/>
            <person name="Stiekema W."/>
            <person name="Entian K.-D."/>
            <person name="Terryn N."/>
            <person name="Harris B."/>
            <person name="Ansorge W."/>
            <person name="Brandt P."/>
            <person name="Grivell L.A."/>
            <person name="Rieger M."/>
            <person name="Weichselgartner M."/>
            <person name="de Simone V."/>
            <person name="Obermaier B."/>
            <person name="Mache R."/>
            <person name="Mueller M."/>
            <person name="Kreis M."/>
            <person name="Delseny M."/>
            <person name="Puigdomenech P."/>
            <person name="Watson M."/>
            <person name="Schmidtheini T."/>
            <person name="Reichert B."/>
            <person name="Portetelle D."/>
            <person name="Perez-Alonso M."/>
            <person name="Boutry M."/>
            <person name="Bancroft I."/>
            <person name="Vos P."/>
            <person name="Hoheisel J."/>
            <person name="Zimmermann W."/>
            <person name="Wedler H."/>
            <person name="Ridley P."/>
            <person name="Langham S.-A."/>
            <person name="McCullagh B."/>
            <person name="Bilham L."/>
            <person name="Robben J."/>
            <person name="van der Schueren J."/>
            <person name="Grymonprez B."/>
            <person name="Chuang Y.-J."/>
            <person name="Vandenbussche F."/>
            <person name="Braeken M."/>
            <person name="Weltjens I."/>
            <person name="Voet M."/>
            <person name="Bastiaens I."/>
            <person name="Aert R."/>
            <person name="Defoor E."/>
            <person name="Weitzenegger T."/>
            <person name="Bothe G."/>
            <person name="Ramsperger U."/>
            <person name="Hilbert H."/>
            <person name="Braun M."/>
            <person name="Holzer E."/>
            <person name="Brandt A."/>
            <person name="Peters S."/>
            <person name="van Staveren M."/>
            <person name="Dirkse W."/>
            <person name="Mooijman P."/>
            <person name="Klein Lankhorst R."/>
            <person name="Rose M."/>
            <person name="Hauf J."/>
            <person name="Koetter P."/>
            <person name="Berneiser S."/>
            <person name="Hempel S."/>
            <person name="Feldpausch M."/>
            <person name="Lamberth S."/>
            <person name="Van den Daele H."/>
            <person name="De Keyser A."/>
            <person name="Buysshaert C."/>
            <person name="Gielen J."/>
            <person name="Villarroel R."/>
            <person name="De Clercq R."/>
            <person name="van Montagu M."/>
            <person name="Rogers J."/>
            <person name="Cronin A."/>
            <person name="Quail M.A."/>
            <person name="Bray-Allen S."/>
            <person name="Clark L."/>
            <person name="Doggett J."/>
            <person name="Hall S."/>
            <person name="Kay M."/>
            <person name="Lennard N."/>
            <person name="McLay K."/>
            <person name="Mayes R."/>
            <person name="Pettett A."/>
            <person name="Rajandream M.A."/>
            <person name="Lyne M."/>
            <person name="Benes V."/>
            <person name="Rechmann S."/>
            <person name="Borkova D."/>
            <person name="Bloecker H."/>
            <person name="Scharfe M."/>
            <person name="Grimm M."/>
            <person name="Loehnert T.-H."/>
            <person name="Dose S."/>
            <person name="de Haan M."/>
            <person name="Maarse A.C."/>
            <person name="Schaefer M."/>
            <person name="Mueller-Auer S."/>
            <person name="Gabel C."/>
            <person name="Fuchs M."/>
            <person name="Fartmann B."/>
            <person name="Granderath K."/>
            <person name="Dauner D."/>
            <person name="Herzl A."/>
            <person name="Neumann S."/>
            <person name="Argiriou A."/>
            <person name="Vitale D."/>
            <person name="Liguori R."/>
            <person name="Piravandi E."/>
            <person name="Massenet O."/>
            <person name="Quigley F."/>
            <person name="Clabauld G."/>
            <person name="Muendlein A."/>
            <person name="Felber R."/>
            <person name="Schnabl S."/>
            <person name="Hiller R."/>
            <person name="Schmidt W."/>
            <person name="Lecharny A."/>
            <person name="Aubourg S."/>
            <person name="Chefdor F."/>
            <person name="Cooke R."/>
            <person name="Berger C."/>
            <person name="Monfort A."/>
            <person name="Casacuberta E."/>
            <person name="Gibbons T."/>
            <person name="Weber N."/>
            <person name="Vandenbol M."/>
            <person name="Bargues M."/>
            <person name="Terol J."/>
            <person name="Torres A."/>
            <person name="Perez-Perez A."/>
            <person name="Purnelle B."/>
            <person name="Bent E."/>
            <person name="Johnson S."/>
            <person name="Tacon D."/>
            <person name="Jesse T."/>
            <person name="Heijnen L."/>
            <person name="Schwarz S."/>
            <person name="Scholler P."/>
            <person name="Heber S."/>
            <person name="Francs P."/>
            <person name="Bielke C."/>
            <person name="Frishman D."/>
            <person name="Haase D."/>
            <person name="Lemcke K."/>
            <person name="Mewes H.-W."/>
            <person name="Stocker S."/>
            <person name="Zaccaria P."/>
            <person name="Bevan M."/>
            <person name="Wilson R.K."/>
            <person name="de la Bastide M."/>
            <person name="Habermann K."/>
            <person name="Parnell L."/>
            <person name="Dedhia N."/>
            <person name="Gnoj L."/>
            <person name="Schutz K."/>
            <person name="Huang E."/>
            <person name="Spiegel L."/>
            <person name="Sekhon M."/>
            <person name="Murray J."/>
            <person name="Sheet P."/>
            <person name="Cordes M."/>
            <person name="Abu-Threideh J."/>
            <person name="Stoneking T."/>
            <person name="Kalicki J."/>
            <person name="Graves T."/>
            <person name="Harmon G."/>
            <person name="Edwards J."/>
            <person name="Latreille P."/>
            <person name="Courtney L."/>
            <person name="Cloud J."/>
            <person name="Abbott A."/>
            <person name="Scott K."/>
            <person name="Johnson D."/>
            <person name="Minx P."/>
            <person name="Bentley D."/>
            <person name="Fulton B."/>
            <person name="Miller N."/>
            <person name="Greco T."/>
            <person name="Kemp K."/>
            <person name="Kramer J."/>
            <person name="Fulton L."/>
            <person name="Mardis E."/>
            <person name="Dante M."/>
            <person name="Pepin K."/>
            <person name="Hillier L.W."/>
            <person name="Nelson J."/>
            <person name="Spieth J."/>
            <person name="Ryan E."/>
            <person name="Andrews S."/>
            <person name="Geisel C."/>
            <person name="Layman D."/>
            <person name="Du H."/>
            <person name="Ali J."/>
            <person name="Berghoff A."/>
            <person name="Jones K."/>
            <person name="Drone K."/>
            <person name="Cotton M."/>
            <person name="Joshu C."/>
            <person name="Antonoiu B."/>
            <person name="Zidanic M."/>
            <person name="Strong C."/>
            <person name="Sun H."/>
            <person name="Lamar B."/>
            <person name="Yordan C."/>
            <person name="Ma P."/>
            <person name="Zhong J."/>
            <person name="Preston R."/>
            <person name="Vil D."/>
            <person name="Shekher M."/>
            <person name="Matero A."/>
            <person name="Shah R."/>
            <person name="Swaby I.K."/>
            <person name="O'Shaughnessy A."/>
            <person name="Rodriguez M."/>
            <person name="Hoffman J."/>
            <person name="Till S."/>
            <person name="Granat S."/>
            <person name="Shohdy N."/>
            <person name="Hasegawa A."/>
            <person name="Hameed A."/>
            <person name="Lodhi M."/>
            <person name="Johnson A."/>
            <person name="Chen E."/>
            <person name="Marra M.A."/>
            <person name="Martienssen R."/>
            <person name="McCombie W.R."/>
        </authorList>
    </citation>
    <scope>NUCLEOTIDE SEQUENCE [LARGE SCALE GENOMIC DNA]</scope>
    <source>
        <strain>cv. Columbia</strain>
    </source>
</reference>
<reference key="2">
    <citation type="journal article" date="2017" name="Plant J.">
        <title>Araport11: a complete reannotation of the Arabidopsis thaliana reference genome.</title>
        <authorList>
            <person name="Cheng C.Y."/>
            <person name="Krishnakumar V."/>
            <person name="Chan A.P."/>
            <person name="Thibaud-Nissen F."/>
            <person name="Schobel S."/>
            <person name="Town C.D."/>
        </authorList>
    </citation>
    <scope>GENOME REANNOTATION</scope>
    <source>
        <strain>cv. Columbia</strain>
    </source>
</reference>
<reference key="3">
    <citation type="submission" date="2006-07" db="EMBL/GenBank/DDBJ databases">
        <title>Large-scale analysis of RIKEN Arabidopsis full-length (RAFL) cDNAs.</title>
        <authorList>
            <person name="Totoki Y."/>
            <person name="Seki M."/>
            <person name="Ishida J."/>
            <person name="Nakajima M."/>
            <person name="Enju A."/>
            <person name="Kamiya A."/>
            <person name="Narusaka M."/>
            <person name="Shin-i T."/>
            <person name="Nakagawa M."/>
            <person name="Sakamoto N."/>
            <person name="Oishi K."/>
            <person name="Kohara Y."/>
            <person name="Kobayashi M."/>
            <person name="Toyoda A."/>
            <person name="Sakaki Y."/>
            <person name="Sakurai T."/>
            <person name="Iida K."/>
            <person name="Akiyama K."/>
            <person name="Satou M."/>
            <person name="Toyoda T."/>
            <person name="Konagaya A."/>
            <person name="Carninci P."/>
            <person name="Kawai J."/>
            <person name="Hayashizaki Y."/>
            <person name="Shinozaki K."/>
        </authorList>
    </citation>
    <scope>NUCLEOTIDE SEQUENCE [LARGE SCALE MRNA]</scope>
    <source>
        <strain>cv. Columbia</strain>
    </source>
</reference>
<reference key="4">
    <citation type="journal article" date="2000" name="Plant Mol. Biol.">
        <title>In Arabidopsis thaliana, 1% of the genome codes for a novel protein family unique to plants.</title>
        <authorList>
            <person name="Aubourg S."/>
            <person name="Boudet N."/>
            <person name="Kreis M."/>
            <person name="Lecharny A."/>
        </authorList>
    </citation>
    <scope>GENE FAMILY</scope>
</reference>
<reference key="5">
    <citation type="journal article" date="2004" name="Plant Cell">
        <title>Genome-wide analysis of Arabidopsis pentatricopeptide repeat proteins reveals their essential role in organelle biogenesis.</title>
        <authorList>
            <person name="Lurin C."/>
            <person name="Andres C."/>
            <person name="Aubourg S."/>
            <person name="Bellaoui M."/>
            <person name="Bitton F."/>
            <person name="Bruyere C."/>
            <person name="Caboche M."/>
            <person name="Debast C."/>
            <person name="Gualberto J."/>
            <person name="Hoffmann B."/>
            <person name="Lecharny A."/>
            <person name="Le Ret M."/>
            <person name="Martin-Magniette M.-L."/>
            <person name="Mireau H."/>
            <person name="Peeters N."/>
            <person name="Renou J.-P."/>
            <person name="Szurek B."/>
            <person name="Taconnat L."/>
            <person name="Small I."/>
        </authorList>
    </citation>
    <scope>GENE FAMILY</scope>
</reference>
<reference key="6">
    <citation type="journal article" date="2010" name="Chin. Sci. Bull.">
        <title>The PPR protein PDM1 is involved in the processing of rpoA pre-mRNA in Arabidopsis thaliana.</title>
        <authorList>
            <person name="Wu H."/>
            <person name="Zhang L."/>
        </authorList>
    </citation>
    <scope>FUNCTION</scope>
</reference>
<reference key="7">
    <citation type="journal article" date="2012" name="Chin. Sci. Bull.">
        <title>The Arabidopsis pentatricopeptide repeat protein PDM1 is associated with the intergenic sequence of S11-rpoA for rpoA monocistronic RNA cleavage.</title>
        <authorList>
            <person name="Wu H."/>
            <person name="Zhang L."/>
            <person name="Yin Q.Q."/>
            <person name="Cui Y.L."/>
            <person name="Zhang G.R."/>
            <person name="Zhang H.D."/>
            <person name="Wang X.M."/>
            <person name="Yang Z.N."/>
        </authorList>
    </citation>
    <scope>FUNCTION</scope>
    <scope>SUBCELLULAR LOCATION</scope>
    <scope>DISRUPTION PHENOTYPE</scope>
</reference>
<reference key="8">
    <citation type="journal article" date="2013" name="Plant Physiol.">
        <title>Seedling Lethal1, a pentatricopeptide repeat protein lacking an E/E+ or DYW domain in Arabidopsis, is involved in plastid gene expression and early chloroplast development.</title>
        <authorList>
            <person name="Pyo Y.J."/>
            <person name="Kwon K.C."/>
            <person name="Kim A."/>
            <person name="Cho M.H."/>
        </authorList>
    </citation>
    <scope>FUNCTION</scope>
    <scope>SUBCELLULAR LOCATION</scope>
    <scope>TISSUE SPECIFICITY</scope>
    <scope>DISRUPTION PHENOTYPE</scope>
</reference>
<reference key="9">
    <citation type="journal article" date="2015" name="Photosyn. Res.">
        <title>PPR protein PDM1/SEL1 is involved in RNA editing and splicing of plastid genes in Arabidopsis thaliana.</title>
        <authorList>
            <person name="Zhang H.D."/>
            <person name="Cui Y.L."/>
            <person name="Huang C."/>
            <person name="Yin Q.Q."/>
            <person name="Qin X.M."/>
            <person name="Xu T."/>
            <person name="He X.F."/>
            <person name="Zhang Y."/>
            <person name="Li Z.R."/>
            <person name="Yang Z.N."/>
        </authorList>
    </citation>
    <scope>FUNCTION</scope>
    <scope>INTERACTION WITH MORF8/RIP1; MORF2/RIP2 AND MORF9/RIP9</scope>
</reference>
<organism>
    <name type="scientific">Arabidopsis thaliana</name>
    <name type="common">Mouse-ear cress</name>
    <dbReference type="NCBI Taxonomy" id="3702"/>
    <lineage>
        <taxon>Eukaryota</taxon>
        <taxon>Viridiplantae</taxon>
        <taxon>Streptophyta</taxon>
        <taxon>Embryophyta</taxon>
        <taxon>Tracheophyta</taxon>
        <taxon>Spermatophyta</taxon>
        <taxon>Magnoliopsida</taxon>
        <taxon>eudicotyledons</taxon>
        <taxon>Gunneridae</taxon>
        <taxon>Pentapetalae</taxon>
        <taxon>rosids</taxon>
        <taxon>malvids</taxon>
        <taxon>Brassicales</taxon>
        <taxon>Brassicaceae</taxon>
        <taxon>Camelineae</taxon>
        <taxon>Arabidopsis</taxon>
    </lineage>
</organism>
<comment type="function">
    <text evidence="2 3 4 5">Required for proper chloroplast development (PubMed:24144791, Ref.7). Involved in the regulation of plastid gene expression probably through regulation of plastid-encoded polymerase (PEP) dependent chloroplast transcription (PubMed:24144791). Required for RNA editing of several chloroplastic transcripts, especially accD transcripts (PubMed:24144791, PubMed:26123918). Required for processing of the chloroplastic rpoA pre-mRNA (Ref.6, Ref.7). Required for the monocistronic rpoA transcript processing from the rpl23-rpl2-rps19-rpl22-rps3-rpl16-rpl14-rps8-rpl36-rps11-rpoA polycistron. Binds the intergenic sequence of rps11-rpoA for rpoA monocistronic RNA cleavage (Ref.7).</text>
</comment>
<comment type="subunit">
    <text evidence="3">Interacts with MORF8/RIP1, MORF2/RIP2 and MORF9/RIP9.</text>
</comment>
<comment type="subcellular location">
    <subcellularLocation>
        <location evidence="5">Plastid</location>
        <location evidence="5">Chloroplast</location>
    </subcellularLocation>
</comment>
<comment type="tissue specificity">
    <text evidence="2">Expressed specifically in aerial greening tissues, such as cotyledons, rosette leaves, cauline leaves, stems, sepals, stamens, carpels and siliques.</text>
</comment>
<comment type="disruption phenotype">
    <text evidence="2 5">Albino lethal phenotype with severe chloroplast development defects.</text>
</comment>
<comment type="similarity">
    <text evidence="8">Belongs to the PPR family. PCMP-A subfamily.</text>
</comment>
<comment type="sequence caution" evidence="8">
    <conflict type="erroneous gene model prediction">
        <sequence resource="EMBL-CDS" id="CAA16732"/>
    </conflict>
</comment>
<comment type="sequence caution" evidence="8">
    <conflict type="erroneous gene model prediction">
        <sequence resource="EMBL-CDS" id="CAB78854"/>
    </conflict>
</comment>
<comment type="online information" name="Pentatricopeptide repeat proteins">
    <link uri="https://ppr.plantenergy.uwa.edu.au"/>
</comment>
<name>PP319_ARATH</name>
<evidence type="ECO:0000255" key="1"/>
<evidence type="ECO:0000269" key="2">
    <source>
    </source>
</evidence>
<evidence type="ECO:0000269" key="3">
    <source>
    </source>
</evidence>
<evidence type="ECO:0000269" key="4">
    <source ref="6"/>
</evidence>
<evidence type="ECO:0000269" key="5">
    <source ref="7"/>
</evidence>
<evidence type="ECO:0000303" key="6">
    <source>
    </source>
</evidence>
<evidence type="ECO:0000303" key="7">
    <source ref="6"/>
</evidence>
<evidence type="ECO:0000305" key="8"/>
<protein>
    <recommendedName>
        <fullName>Pentatricopeptide repeat-containing protein At4g18520, chloroplastic</fullName>
    </recommendedName>
    <alternativeName>
        <fullName evidence="7">Protein PIGMENT-DEFICIENT MUTANT 1</fullName>
    </alternativeName>
    <alternativeName>
        <fullName evidence="6">Protein SEEDLING LETHAL 1</fullName>
    </alternativeName>
</protein>
<feature type="transit peptide" description="Chloroplast" evidence="1">
    <location>
        <begin position="1"/>
        <end position="19"/>
    </location>
</feature>
<feature type="chain" id="PRO_0000363436" description="Pentatricopeptide repeat-containing protein At4g18520, chloroplastic">
    <location>
        <begin position="20"/>
        <end position="617"/>
    </location>
</feature>
<feature type="repeat" description="PPR 1">
    <location>
        <begin position="116"/>
        <end position="146"/>
    </location>
</feature>
<feature type="repeat" description="PPR 2">
    <location>
        <begin position="147"/>
        <end position="181"/>
    </location>
</feature>
<feature type="repeat" description="PPR 3">
    <location>
        <begin position="183"/>
        <end position="217"/>
    </location>
</feature>
<feature type="repeat" description="PPR 4">
    <location>
        <begin position="222"/>
        <end position="247"/>
    </location>
</feature>
<feature type="repeat" description="PPR 5">
    <location>
        <begin position="248"/>
        <end position="282"/>
    </location>
</feature>
<feature type="repeat" description="PPR 6">
    <location>
        <begin position="283"/>
        <end position="317"/>
    </location>
</feature>
<feature type="repeat" description="PPR 7">
    <location>
        <begin position="318"/>
        <end position="348"/>
    </location>
</feature>
<feature type="repeat" description="PPR 8">
    <location>
        <begin position="349"/>
        <end position="383"/>
    </location>
</feature>
<feature type="repeat" description="PPR 9">
    <location>
        <begin position="384"/>
        <end position="418"/>
    </location>
</feature>
<feature type="repeat" description="PPR 10">
    <location>
        <begin position="419"/>
        <end position="449"/>
    </location>
</feature>
<feature type="repeat" description="PPR 11">
    <location>
        <begin position="450"/>
        <end position="484"/>
    </location>
</feature>
<feature type="repeat" description="PPR 12">
    <location>
        <begin position="485"/>
        <end position="519"/>
    </location>
</feature>
<feature type="repeat" description="PPR 13">
    <location>
        <begin position="520"/>
        <end position="550"/>
    </location>
</feature>
<feature type="repeat" description="PPR 14">
    <location>
        <begin position="551"/>
        <end position="585"/>
    </location>
</feature>
<sequence>MFSLSLIQPRLRISEIPVTQSYKSPTICYSSDSRTKREEQRHVRLPGFRLVSGKRASFDSGFSGFKGENVNQDDSSSFDSERVDYALLAEWLQSSNGMRLIKRIHAMALKCFDDQVIYFGNNLISSCVRLGDLVYARKVFDSMPEKNTVTWTAMIDGYLKYGLEDEAFALFEDYVKHGIRFTNERMFVCLLNLCSRRAEFELGRQVHGNMVKVGVGNLIVESSLVYFYAQCGELTSALRAFDMMEEKDVISWTAVISACSRKGHGIKAIGMFIGMLNHWFLPNEFTVCSILKACSEEKALRFGRQVHSLVVKRMIKTDVFVGTSLMDMYAKCGEISDCRKVFDGMSNRNTVTWTSIIAAHAREGFGEEAISLFRIMKRRHLIANNLTVVSILRACGSVGALLLGKELHAQIIKNSIEKNVYIGSTLVWLYCKCGESRDAFNVLQQLPSRDVVSWTAMISGCSSLGHESEALDFLKEMIQEGVEPNPFTYSSALKACANSESLLIGRSIHSIAKKNHALSNVFVGSALIHMYAKCGFVSEAFRVFDSMPEKNLVSWKAMIMGYARNGFCREALKLMYRMEAEGFEVDDYIFATILSTCGDIELDEAVESSATCYLETS</sequence>
<dbReference type="EMBL" id="AL021710">
    <property type="protein sequence ID" value="CAA16732.1"/>
    <property type="status" value="ALT_SEQ"/>
    <property type="molecule type" value="Genomic_DNA"/>
</dbReference>
<dbReference type="EMBL" id="AL161548">
    <property type="protein sequence ID" value="CAB78854.1"/>
    <property type="status" value="ALT_SEQ"/>
    <property type="molecule type" value="Genomic_DNA"/>
</dbReference>
<dbReference type="EMBL" id="CP002687">
    <property type="protein sequence ID" value="AEE84057.1"/>
    <property type="molecule type" value="Genomic_DNA"/>
</dbReference>
<dbReference type="EMBL" id="AK229394">
    <property type="protein sequence ID" value="BAF01256.1"/>
    <property type="molecule type" value="mRNA"/>
</dbReference>
<dbReference type="PIR" id="T04548">
    <property type="entry name" value="T04548"/>
</dbReference>
<dbReference type="RefSeq" id="NP_193587.4">
    <property type="nucleotide sequence ID" value="NM_117966.5"/>
</dbReference>
<dbReference type="SMR" id="Q0WNP3"/>
<dbReference type="BioGRID" id="12877">
    <property type="interactions" value="3"/>
</dbReference>
<dbReference type="FunCoup" id="Q0WNP3">
    <property type="interactions" value="586"/>
</dbReference>
<dbReference type="STRING" id="3702.Q0WNP3"/>
<dbReference type="iPTMnet" id="Q0WNP3"/>
<dbReference type="PaxDb" id="3702-AT4G18520.1"/>
<dbReference type="ProteomicsDB" id="249223"/>
<dbReference type="EnsemblPlants" id="AT4G18520.1">
    <property type="protein sequence ID" value="AT4G18520.1"/>
    <property type="gene ID" value="AT4G18520"/>
</dbReference>
<dbReference type="GeneID" id="827584"/>
<dbReference type="Gramene" id="AT4G18520.1">
    <property type="protein sequence ID" value="AT4G18520.1"/>
    <property type="gene ID" value="AT4G18520"/>
</dbReference>
<dbReference type="KEGG" id="ath:AT4G18520"/>
<dbReference type="Araport" id="AT4G18520"/>
<dbReference type="TAIR" id="AT4G18520">
    <property type="gene designation" value="SEL1"/>
</dbReference>
<dbReference type="eggNOG" id="KOG4197">
    <property type="taxonomic scope" value="Eukaryota"/>
</dbReference>
<dbReference type="HOGENOM" id="CLU_002706_0_1_1"/>
<dbReference type="InParanoid" id="Q0WNP3"/>
<dbReference type="OMA" id="MFVCLLN"/>
<dbReference type="OrthoDB" id="185373at2759"/>
<dbReference type="PhylomeDB" id="Q0WNP3"/>
<dbReference type="PRO" id="PR:Q0WNP3"/>
<dbReference type="Proteomes" id="UP000006548">
    <property type="component" value="Chromosome 4"/>
</dbReference>
<dbReference type="ExpressionAtlas" id="Q0WNP3">
    <property type="expression patterns" value="baseline and differential"/>
</dbReference>
<dbReference type="GO" id="GO:0009507">
    <property type="term" value="C:chloroplast"/>
    <property type="evidence" value="ECO:0000314"/>
    <property type="project" value="UniProtKB"/>
</dbReference>
<dbReference type="GO" id="GO:0003729">
    <property type="term" value="F:mRNA binding"/>
    <property type="evidence" value="ECO:0000314"/>
    <property type="project" value="TAIR"/>
</dbReference>
<dbReference type="GO" id="GO:1900865">
    <property type="term" value="P:chloroplast RNA modification"/>
    <property type="evidence" value="ECO:0000315"/>
    <property type="project" value="TAIR"/>
</dbReference>
<dbReference type="GO" id="GO:0006397">
    <property type="term" value="P:mRNA processing"/>
    <property type="evidence" value="ECO:0007669"/>
    <property type="project" value="UniProtKB-KW"/>
</dbReference>
<dbReference type="GO" id="GO:0008380">
    <property type="term" value="P:RNA splicing"/>
    <property type="evidence" value="ECO:0000315"/>
    <property type="project" value="TAIR"/>
</dbReference>
<dbReference type="FunFam" id="1.25.40.10:FF:001182">
    <property type="entry name" value="Pentatricopeptide repeat-containing protein At4g18520, chloroplastic"/>
    <property type="match status" value="1"/>
</dbReference>
<dbReference type="FunFam" id="1.25.40.10:FF:001499">
    <property type="entry name" value="Pentatricopeptide repeat-containing protein At4g18520, chloroplastic"/>
    <property type="match status" value="1"/>
</dbReference>
<dbReference type="FunFam" id="1.25.40.10:FF:000285">
    <property type="entry name" value="Pentatricopeptide repeat-containing protein, chloroplastic"/>
    <property type="match status" value="1"/>
</dbReference>
<dbReference type="FunFam" id="1.25.40.10:FF:000730">
    <property type="entry name" value="Pentatricopeptide repeat-containing protein, chloroplastic"/>
    <property type="match status" value="1"/>
</dbReference>
<dbReference type="FunFam" id="1.25.40.10:FF:000983">
    <property type="entry name" value="Pentatricopeptide repeat-containing protein, chloroplastic"/>
    <property type="match status" value="1"/>
</dbReference>
<dbReference type="Gene3D" id="1.25.40.10">
    <property type="entry name" value="Tetratricopeptide repeat domain"/>
    <property type="match status" value="5"/>
</dbReference>
<dbReference type="InterPro" id="IPR002885">
    <property type="entry name" value="Pentatricopeptide_rpt"/>
</dbReference>
<dbReference type="InterPro" id="IPR046960">
    <property type="entry name" value="PPR_At4g14850-like_plant"/>
</dbReference>
<dbReference type="InterPro" id="IPR011990">
    <property type="entry name" value="TPR-like_helical_dom_sf"/>
</dbReference>
<dbReference type="NCBIfam" id="TIGR00756">
    <property type="entry name" value="PPR"/>
    <property type="match status" value="5"/>
</dbReference>
<dbReference type="PANTHER" id="PTHR47926">
    <property type="entry name" value="PENTATRICOPEPTIDE REPEAT-CONTAINING PROTEIN"/>
    <property type="match status" value="1"/>
</dbReference>
<dbReference type="PANTHER" id="PTHR47926:SF411">
    <property type="entry name" value="PENTATRICOPEPTIDE REPEAT-CONTAINING PROTEIN"/>
    <property type="match status" value="1"/>
</dbReference>
<dbReference type="Pfam" id="PF01535">
    <property type="entry name" value="PPR"/>
    <property type="match status" value="6"/>
</dbReference>
<dbReference type="Pfam" id="PF13041">
    <property type="entry name" value="PPR_2"/>
    <property type="match status" value="2"/>
</dbReference>
<dbReference type="PROSITE" id="PS51375">
    <property type="entry name" value="PPR"/>
    <property type="match status" value="13"/>
</dbReference>
<accession>Q0WNP3</accession>
<accession>O49520</accession>
<gene>
    <name type="primary">PCMP-A2</name>
    <name evidence="7" type="synonym">PDM1</name>
    <name evidence="6" type="synonym">SEL1</name>
    <name type="ordered locus">At4g18520</name>
    <name type="ORF">F28J12.180</name>
</gene>
<keyword id="KW-0150">Chloroplast</keyword>
<keyword id="KW-0507">mRNA processing</keyword>
<keyword id="KW-0934">Plastid</keyword>
<keyword id="KW-1185">Reference proteome</keyword>
<keyword id="KW-0677">Repeat</keyword>
<keyword id="KW-0694">RNA-binding</keyword>
<keyword id="KW-0809">Transit peptide</keyword>
<proteinExistence type="evidence at protein level"/>